<sequence>MSKRRKHSWPQPLKGAESRLWYGGDYNPDQWPEEVWDDDIRLMKKAGVNLVSVGIFSWAKIEPEEGKYDFDWLDRAIDKLGKAGIAVDLASATASPPMWLTQAHPEVLWKDERGDTVWPGAREHWRPTSPVFREYALNLCRRMAEHYKGNPYVVAWHVSNEYGCHNRFDYSDDAMRAFQKWCKKRYKTIDAVNEAWGTAFWAQHMNDFSEIIPPRYIGDGNFMNPGKLLDYKRFSSDALKELYIAERDVLESITPGLPLTTNFMVSAGGSMLDYDDWGAEVDFVSNDHYFTPGEAHFDEVAYAASLMDGISRKEPWFQMEHSTSAVNWRPINYRAEPGSVVRDSLAQVAMGADAICYFQWRQSKAGAEKWHSSMVPHAGEDSQIFRDVCELGADLGRLSDEGLMGTKTVKSKVAVVFDYESQWATEYTANPTQQVDHWTEPLDWFRALADNGITADVVPVRSDWDSYEIAVLPCVYLLSEETSRRVREFVANGGKLFVTYYTGLSDENDHIWLGGYPGSIRDVVGVRVEEFAPMGNDMPGALDHLDLDNGTVAHDFADVITSTADTSTVLASYKAERWTGMNEVPAIVANGYGDGRTVYVGCRLGRQGLAKSLPAMLGSMGLSDLAGDGRVLRVERADAAAANHFEFVFNRTHEPVTVDVEGEAIAASLAHVDDGRATIDPTGVVVLRR</sequence>
<keyword id="KW-0326">Glycosidase</keyword>
<keyword id="KW-0378">Hydrolase</keyword>
<organism>
    <name type="scientific">Bifidobacterium bifidum (strain DSM 20082 / JCM 1254 / BCRC 11844 / KCTC 3440 / E319f (Variant a))</name>
    <dbReference type="NCBI Taxonomy" id="398514"/>
    <lineage>
        <taxon>Bacteria</taxon>
        <taxon>Bacillati</taxon>
        <taxon>Actinomycetota</taxon>
        <taxon>Actinomycetes</taxon>
        <taxon>Bifidobacteriales</taxon>
        <taxon>Bifidobacteriaceae</taxon>
        <taxon>Bifidobacterium</taxon>
    </lineage>
</organism>
<protein>
    <recommendedName>
        <fullName>Beta-galactosidase BbgII</fullName>
        <shortName evidence="2">Beta-gal</shortName>
        <ecNumber>3.2.1.23</ecNumber>
    </recommendedName>
</protein>
<accession>D4QFE7</accession>
<proteinExistence type="inferred from homology"/>
<evidence type="ECO:0000250" key="1">
    <source>
        <dbReference type="UniProtKB" id="O69315"/>
    </source>
</evidence>
<evidence type="ECO:0000250" key="2">
    <source>
        <dbReference type="UniProtKB" id="P19668"/>
    </source>
</evidence>
<evidence type="ECO:0000255" key="3"/>
<evidence type="ECO:0000312" key="4">
    <source>
        <dbReference type="EMBL" id="BAI94826.1"/>
    </source>
</evidence>
<gene>
    <name evidence="4" type="primary">bbgII</name>
</gene>
<name>BGAL_BIFB1</name>
<feature type="chain" id="PRO_0000407684" description="Beta-galactosidase BbgII">
    <location>
        <begin position="1"/>
        <end position="689"/>
    </location>
</feature>
<feature type="active site" description="Proton donor" evidence="1">
    <location>
        <position position="161"/>
    </location>
</feature>
<feature type="active site" description="Nucleophile" evidence="1">
    <location>
        <position position="320"/>
    </location>
</feature>
<feature type="binding site" evidence="1">
    <location>
        <position position="122"/>
    </location>
    <ligand>
        <name>substrate</name>
    </ligand>
</feature>
<feature type="binding site" evidence="1">
    <location>
        <position position="160"/>
    </location>
    <ligand>
        <name>substrate</name>
    </ligand>
</feature>
<feature type="binding site" evidence="1">
    <location>
        <position position="328"/>
    </location>
    <ligand>
        <name>substrate</name>
    </ligand>
</feature>
<feature type="binding site" evidence="1">
    <location>
        <begin position="368"/>
        <end position="371"/>
    </location>
    <ligand>
        <name>substrate</name>
    </ligand>
</feature>
<dbReference type="EC" id="3.2.1.23"/>
<dbReference type="EMBL" id="AB542712">
    <property type="protein sequence ID" value="BAI94826.1"/>
    <property type="molecule type" value="Genomic_DNA"/>
</dbReference>
<dbReference type="RefSeq" id="WP_047270929.1">
    <property type="nucleotide sequence ID" value="NZ_CAXTZK010000005.1"/>
</dbReference>
<dbReference type="SMR" id="D4QFE7"/>
<dbReference type="STRING" id="1681.RY70_1493"/>
<dbReference type="GO" id="GO:0009341">
    <property type="term" value="C:beta-galactosidase complex"/>
    <property type="evidence" value="ECO:0007669"/>
    <property type="project" value="InterPro"/>
</dbReference>
<dbReference type="GO" id="GO:0004565">
    <property type="term" value="F:beta-galactosidase activity"/>
    <property type="evidence" value="ECO:0007669"/>
    <property type="project" value="UniProtKB-EC"/>
</dbReference>
<dbReference type="GO" id="GO:0006012">
    <property type="term" value="P:galactose metabolic process"/>
    <property type="evidence" value="ECO:0007669"/>
    <property type="project" value="InterPro"/>
</dbReference>
<dbReference type="CDD" id="cd03143">
    <property type="entry name" value="A4_beta-galactosidase_middle_domain"/>
    <property type="match status" value="1"/>
</dbReference>
<dbReference type="Gene3D" id="3.40.50.880">
    <property type="match status" value="1"/>
</dbReference>
<dbReference type="Gene3D" id="3.20.20.80">
    <property type="entry name" value="Glycosidases"/>
    <property type="match status" value="1"/>
</dbReference>
<dbReference type="Gene3D" id="2.60.40.1180">
    <property type="entry name" value="Golgi alpha-mannosidase II"/>
    <property type="match status" value="1"/>
</dbReference>
<dbReference type="InterPro" id="IPR013739">
    <property type="entry name" value="Beta_galactosidase_C"/>
</dbReference>
<dbReference type="InterPro" id="IPR013738">
    <property type="entry name" value="Beta_galactosidase_Trimer"/>
</dbReference>
<dbReference type="InterPro" id="IPR029062">
    <property type="entry name" value="Class_I_gatase-like"/>
</dbReference>
<dbReference type="InterPro" id="IPR003476">
    <property type="entry name" value="Glyco_hydro_42"/>
</dbReference>
<dbReference type="InterPro" id="IPR013529">
    <property type="entry name" value="Glyco_hydro_42_N"/>
</dbReference>
<dbReference type="InterPro" id="IPR013780">
    <property type="entry name" value="Glyco_hydro_b"/>
</dbReference>
<dbReference type="InterPro" id="IPR017853">
    <property type="entry name" value="Glycoside_hydrolase_SF"/>
</dbReference>
<dbReference type="PANTHER" id="PTHR36447">
    <property type="entry name" value="BETA-GALACTOSIDASE GANA"/>
    <property type="match status" value="1"/>
</dbReference>
<dbReference type="PANTHER" id="PTHR36447:SF1">
    <property type="entry name" value="BETA-GALACTOSIDASE GANA"/>
    <property type="match status" value="1"/>
</dbReference>
<dbReference type="Pfam" id="PF02449">
    <property type="entry name" value="Glyco_hydro_42"/>
    <property type="match status" value="1"/>
</dbReference>
<dbReference type="Pfam" id="PF08533">
    <property type="entry name" value="Glyco_hydro_42C"/>
    <property type="match status" value="1"/>
</dbReference>
<dbReference type="Pfam" id="PF08532">
    <property type="entry name" value="Glyco_hydro_42M"/>
    <property type="match status" value="1"/>
</dbReference>
<dbReference type="PIRSF" id="PIRSF001084">
    <property type="entry name" value="B-galactosidase"/>
    <property type="match status" value="1"/>
</dbReference>
<dbReference type="SUPFAM" id="SSF51445">
    <property type="entry name" value="(Trans)glycosidases"/>
    <property type="match status" value="1"/>
</dbReference>
<dbReference type="SUPFAM" id="SSF52317">
    <property type="entry name" value="Class I glutamine amidotransferase-like"/>
    <property type="match status" value="1"/>
</dbReference>
<comment type="catalytic activity">
    <reaction evidence="2">
        <text>Hydrolysis of terminal non-reducing beta-D-galactose residues in beta-D-galactosides.</text>
        <dbReference type="EC" id="3.2.1.23"/>
    </reaction>
</comment>
<comment type="similarity">
    <text evidence="3">Belongs to the glycosyl hydrolase 42 family.</text>
</comment>
<reference evidence="4" key="1">
    <citation type="journal article" date="2010" name="Glycobiology">
        <title>Cooperation of beta-galactosidase and beta-N-acetylhexosaminidase from bifidobacteria in assimilation of human milk oligosaccharides with type 2 structure.</title>
        <authorList>
            <person name="Miwa M."/>
            <person name="Horimoto T."/>
            <person name="Kiyohara M."/>
            <person name="Katayama T."/>
            <person name="Kitaoka M."/>
            <person name="Ashida H."/>
            <person name="Yamamoto K."/>
        </authorList>
    </citation>
    <scope>NUCLEOTIDE SEQUENCE [GENOMIC DNA]</scope>
    <source>
        <strain evidence="4">DSM 20082 / JCM 1254 / BCRC 11844 / KCTC 3440 / E319f (Variant a)</strain>
    </source>
</reference>